<organism>
    <name type="scientific">Citrifermentans bemidjiense (strain ATCC BAA-1014 / DSM 16622 / JCM 12645 / Bem)</name>
    <name type="common">Geobacter bemidjiensis</name>
    <dbReference type="NCBI Taxonomy" id="404380"/>
    <lineage>
        <taxon>Bacteria</taxon>
        <taxon>Pseudomonadati</taxon>
        <taxon>Thermodesulfobacteriota</taxon>
        <taxon>Desulfuromonadia</taxon>
        <taxon>Geobacterales</taxon>
        <taxon>Geobacteraceae</taxon>
        <taxon>Citrifermentans</taxon>
    </lineage>
</organism>
<proteinExistence type="inferred from homology"/>
<protein>
    <recommendedName>
        <fullName evidence="1">3-phosphoshikimate 1-carboxyvinyltransferase</fullName>
        <ecNumber evidence="1">2.5.1.19</ecNumber>
    </recommendedName>
    <alternativeName>
        <fullName evidence="1">5-enolpyruvylshikimate-3-phosphate synthase</fullName>
        <shortName evidence="1">EPSP synthase</shortName>
        <shortName evidence="1">EPSPS</shortName>
    </alternativeName>
</protein>
<name>AROA_CITBB</name>
<evidence type="ECO:0000255" key="1">
    <source>
        <dbReference type="HAMAP-Rule" id="MF_00210"/>
    </source>
</evidence>
<gene>
    <name evidence="1" type="primary">aroA</name>
    <name type="ordered locus">Gbem_3258</name>
</gene>
<accession>B5E9T1</accession>
<sequence>MQNYTVRPAKSVRGEISVPGDKSISHRSIMFGSIASGVTTVTGFLRGEDALATLEAFRAMGVQIDDDGETVTIQGRGLHGLSEPTDVLDCGNSGTSMRLLTGLLAGQNFFSVLSGDKYLRARPMKRVVGPLAQMGARISGRAGGEKAPLAIQGSKLKGIEYDSPVSSAQVKSAIMLAGLYAGGETVVREPHLSRDHSERMLRAFGAHVETFPGGVKVRGGAELTGRDIVVPGDISSAAFFLVAGLIVPGSDLLIRGVGVNPTRTGIIDVLKGMGGDLELINQRDESGEPVADIRVRHSKLTAMEISGDVVPRAIDEFPAICVAASLAQGTTVVRDAAELRVKETDRISAMADNLKRAGVSIVETPDGMEITGVSSLKGCAADSFGDHRIAMSMMVAGLVAQNETSVSDVECIATSFPGFVNLLEGVVQR</sequence>
<keyword id="KW-0028">Amino-acid biosynthesis</keyword>
<keyword id="KW-0057">Aromatic amino acid biosynthesis</keyword>
<keyword id="KW-0963">Cytoplasm</keyword>
<keyword id="KW-1185">Reference proteome</keyword>
<keyword id="KW-0808">Transferase</keyword>
<feature type="chain" id="PRO_1000099703" description="3-phosphoshikimate 1-carboxyvinyltransferase">
    <location>
        <begin position="1"/>
        <end position="429"/>
    </location>
</feature>
<feature type="active site" description="Proton acceptor" evidence="1">
    <location>
        <position position="315"/>
    </location>
</feature>
<feature type="binding site" evidence="1">
    <location>
        <position position="22"/>
    </location>
    <ligand>
        <name>3-phosphoshikimate</name>
        <dbReference type="ChEBI" id="CHEBI:145989"/>
    </ligand>
</feature>
<feature type="binding site" evidence="1">
    <location>
        <position position="22"/>
    </location>
    <ligand>
        <name>phosphoenolpyruvate</name>
        <dbReference type="ChEBI" id="CHEBI:58702"/>
    </ligand>
</feature>
<feature type="binding site" evidence="1">
    <location>
        <position position="23"/>
    </location>
    <ligand>
        <name>3-phosphoshikimate</name>
        <dbReference type="ChEBI" id="CHEBI:145989"/>
    </ligand>
</feature>
<feature type="binding site" evidence="1">
    <location>
        <position position="27"/>
    </location>
    <ligand>
        <name>3-phosphoshikimate</name>
        <dbReference type="ChEBI" id="CHEBI:145989"/>
    </ligand>
</feature>
<feature type="binding site" evidence="1">
    <location>
        <position position="94"/>
    </location>
    <ligand>
        <name>phosphoenolpyruvate</name>
        <dbReference type="ChEBI" id="CHEBI:58702"/>
    </ligand>
</feature>
<feature type="binding site" evidence="1">
    <location>
        <position position="122"/>
    </location>
    <ligand>
        <name>phosphoenolpyruvate</name>
        <dbReference type="ChEBI" id="CHEBI:58702"/>
    </ligand>
</feature>
<feature type="binding site" evidence="1">
    <location>
        <position position="167"/>
    </location>
    <ligand>
        <name>3-phosphoshikimate</name>
        <dbReference type="ChEBI" id="CHEBI:145989"/>
    </ligand>
</feature>
<feature type="binding site" evidence="1">
    <location>
        <position position="169"/>
    </location>
    <ligand>
        <name>3-phosphoshikimate</name>
        <dbReference type="ChEBI" id="CHEBI:145989"/>
    </ligand>
</feature>
<feature type="binding site" evidence="1">
    <location>
        <position position="169"/>
    </location>
    <ligand>
        <name>phosphoenolpyruvate</name>
        <dbReference type="ChEBI" id="CHEBI:58702"/>
    </ligand>
</feature>
<feature type="binding site" evidence="1">
    <location>
        <position position="315"/>
    </location>
    <ligand>
        <name>3-phosphoshikimate</name>
        <dbReference type="ChEBI" id="CHEBI:145989"/>
    </ligand>
</feature>
<feature type="binding site" evidence="1">
    <location>
        <position position="342"/>
    </location>
    <ligand>
        <name>3-phosphoshikimate</name>
        <dbReference type="ChEBI" id="CHEBI:145989"/>
    </ligand>
</feature>
<feature type="binding site" evidence="1">
    <location>
        <position position="346"/>
    </location>
    <ligand>
        <name>phosphoenolpyruvate</name>
        <dbReference type="ChEBI" id="CHEBI:58702"/>
    </ligand>
</feature>
<feature type="binding site" evidence="1">
    <location>
        <position position="388"/>
    </location>
    <ligand>
        <name>phosphoenolpyruvate</name>
        <dbReference type="ChEBI" id="CHEBI:58702"/>
    </ligand>
</feature>
<comment type="function">
    <text evidence="1">Catalyzes the transfer of the enolpyruvyl moiety of phosphoenolpyruvate (PEP) to the 5-hydroxyl of shikimate-3-phosphate (S3P) to produce enolpyruvyl shikimate-3-phosphate and inorganic phosphate.</text>
</comment>
<comment type="catalytic activity">
    <reaction evidence="1">
        <text>3-phosphoshikimate + phosphoenolpyruvate = 5-O-(1-carboxyvinyl)-3-phosphoshikimate + phosphate</text>
        <dbReference type="Rhea" id="RHEA:21256"/>
        <dbReference type="ChEBI" id="CHEBI:43474"/>
        <dbReference type="ChEBI" id="CHEBI:57701"/>
        <dbReference type="ChEBI" id="CHEBI:58702"/>
        <dbReference type="ChEBI" id="CHEBI:145989"/>
        <dbReference type="EC" id="2.5.1.19"/>
    </reaction>
    <physiologicalReaction direction="left-to-right" evidence="1">
        <dbReference type="Rhea" id="RHEA:21257"/>
    </physiologicalReaction>
</comment>
<comment type="pathway">
    <text evidence="1">Metabolic intermediate biosynthesis; chorismate biosynthesis; chorismate from D-erythrose 4-phosphate and phosphoenolpyruvate: step 6/7.</text>
</comment>
<comment type="subunit">
    <text evidence="1">Monomer.</text>
</comment>
<comment type="subcellular location">
    <subcellularLocation>
        <location evidence="1">Cytoplasm</location>
    </subcellularLocation>
</comment>
<comment type="similarity">
    <text evidence="1">Belongs to the EPSP synthase family.</text>
</comment>
<dbReference type="EC" id="2.5.1.19" evidence="1"/>
<dbReference type="EMBL" id="CP001124">
    <property type="protein sequence ID" value="ACH40255.1"/>
    <property type="molecule type" value="Genomic_DNA"/>
</dbReference>
<dbReference type="RefSeq" id="WP_012531686.1">
    <property type="nucleotide sequence ID" value="NC_011146.1"/>
</dbReference>
<dbReference type="SMR" id="B5E9T1"/>
<dbReference type="STRING" id="404380.Gbem_3258"/>
<dbReference type="KEGG" id="gbm:Gbem_3258"/>
<dbReference type="eggNOG" id="COG0128">
    <property type="taxonomic scope" value="Bacteria"/>
</dbReference>
<dbReference type="HOGENOM" id="CLU_024321_0_1_7"/>
<dbReference type="OrthoDB" id="9809920at2"/>
<dbReference type="UniPathway" id="UPA00053">
    <property type="reaction ID" value="UER00089"/>
</dbReference>
<dbReference type="Proteomes" id="UP000008825">
    <property type="component" value="Chromosome"/>
</dbReference>
<dbReference type="GO" id="GO:0005737">
    <property type="term" value="C:cytoplasm"/>
    <property type="evidence" value="ECO:0007669"/>
    <property type="project" value="UniProtKB-SubCell"/>
</dbReference>
<dbReference type="GO" id="GO:0003866">
    <property type="term" value="F:3-phosphoshikimate 1-carboxyvinyltransferase activity"/>
    <property type="evidence" value="ECO:0007669"/>
    <property type="project" value="UniProtKB-UniRule"/>
</dbReference>
<dbReference type="GO" id="GO:0008652">
    <property type="term" value="P:amino acid biosynthetic process"/>
    <property type="evidence" value="ECO:0007669"/>
    <property type="project" value="UniProtKB-KW"/>
</dbReference>
<dbReference type="GO" id="GO:0009073">
    <property type="term" value="P:aromatic amino acid family biosynthetic process"/>
    <property type="evidence" value="ECO:0007669"/>
    <property type="project" value="UniProtKB-KW"/>
</dbReference>
<dbReference type="GO" id="GO:0009423">
    <property type="term" value="P:chorismate biosynthetic process"/>
    <property type="evidence" value="ECO:0007669"/>
    <property type="project" value="UniProtKB-UniRule"/>
</dbReference>
<dbReference type="CDD" id="cd01556">
    <property type="entry name" value="EPSP_synthase"/>
    <property type="match status" value="1"/>
</dbReference>
<dbReference type="FunFam" id="3.65.10.10:FF:000005">
    <property type="entry name" value="3-phosphoshikimate 1-carboxyvinyltransferase"/>
    <property type="match status" value="1"/>
</dbReference>
<dbReference type="FunFam" id="3.65.10.10:FF:000006">
    <property type="entry name" value="3-phosphoshikimate 1-carboxyvinyltransferase"/>
    <property type="match status" value="1"/>
</dbReference>
<dbReference type="Gene3D" id="3.65.10.10">
    <property type="entry name" value="Enolpyruvate transferase domain"/>
    <property type="match status" value="2"/>
</dbReference>
<dbReference type="HAMAP" id="MF_00210">
    <property type="entry name" value="EPSP_synth"/>
    <property type="match status" value="1"/>
</dbReference>
<dbReference type="InterPro" id="IPR001986">
    <property type="entry name" value="Enolpyruvate_Tfrase_dom"/>
</dbReference>
<dbReference type="InterPro" id="IPR036968">
    <property type="entry name" value="Enolpyruvate_Tfrase_sf"/>
</dbReference>
<dbReference type="InterPro" id="IPR006264">
    <property type="entry name" value="EPSP_synthase"/>
</dbReference>
<dbReference type="InterPro" id="IPR023193">
    <property type="entry name" value="EPSP_synthase_CS"/>
</dbReference>
<dbReference type="InterPro" id="IPR013792">
    <property type="entry name" value="RNA3'P_cycl/enolpyr_Trfase_a/b"/>
</dbReference>
<dbReference type="NCBIfam" id="TIGR01356">
    <property type="entry name" value="aroA"/>
    <property type="match status" value="1"/>
</dbReference>
<dbReference type="PANTHER" id="PTHR21090">
    <property type="entry name" value="AROM/DEHYDROQUINATE SYNTHASE"/>
    <property type="match status" value="1"/>
</dbReference>
<dbReference type="PANTHER" id="PTHR21090:SF5">
    <property type="entry name" value="PENTAFUNCTIONAL AROM POLYPEPTIDE"/>
    <property type="match status" value="1"/>
</dbReference>
<dbReference type="Pfam" id="PF00275">
    <property type="entry name" value="EPSP_synthase"/>
    <property type="match status" value="1"/>
</dbReference>
<dbReference type="PIRSF" id="PIRSF000505">
    <property type="entry name" value="EPSPS"/>
    <property type="match status" value="1"/>
</dbReference>
<dbReference type="SUPFAM" id="SSF55205">
    <property type="entry name" value="EPT/RTPC-like"/>
    <property type="match status" value="1"/>
</dbReference>
<dbReference type="PROSITE" id="PS00104">
    <property type="entry name" value="EPSP_SYNTHASE_1"/>
    <property type="match status" value="1"/>
</dbReference>
<dbReference type="PROSITE" id="PS00885">
    <property type="entry name" value="EPSP_SYNTHASE_2"/>
    <property type="match status" value="1"/>
</dbReference>
<reference key="1">
    <citation type="submission" date="2008-07" db="EMBL/GenBank/DDBJ databases">
        <title>Complete sequence of Geobacter bemidjiensis BEM.</title>
        <authorList>
            <consortium name="US DOE Joint Genome Institute"/>
            <person name="Lucas S."/>
            <person name="Copeland A."/>
            <person name="Lapidus A."/>
            <person name="Glavina del Rio T."/>
            <person name="Dalin E."/>
            <person name="Tice H."/>
            <person name="Bruce D."/>
            <person name="Goodwin L."/>
            <person name="Pitluck S."/>
            <person name="Kiss H."/>
            <person name="Brettin T."/>
            <person name="Detter J.C."/>
            <person name="Han C."/>
            <person name="Kuske C.R."/>
            <person name="Schmutz J."/>
            <person name="Larimer F."/>
            <person name="Land M."/>
            <person name="Hauser L."/>
            <person name="Kyrpides N."/>
            <person name="Lykidis A."/>
            <person name="Lovley D."/>
            <person name="Richardson P."/>
        </authorList>
    </citation>
    <scope>NUCLEOTIDE SEQUENCE [LARGE SCALE GENOMIC DNA]</scope>
    <source>
        <strain>ATCC BAA-1014 / DSM 16622 / JCM 12645 / Bem</strain>
    </source>
</reference>